<accession>P53057</accession>
<accession>D6VV75</accession>
<sequence>MQLFSILSLLSSLMCSLTVLGSSASSYVKFPVQKFADIINIGTQDVSTVFKRNEVLNTTVINGIGVYVVKMEIGTPPQTVYLQLDTGSSDMIVNNADIAYCKSMSDGSDYASTDNYELTATFTGPRSTTTSPELITLSALIGVNSMQETHLLLRITRLSSMTYTY</sequence>
<protein>
    <recommendedName>
        <fullName>Yapsin-5</fullName>
    </recommendedName>
    <alternativeName>
        <fullName>Aspartic proteinase-like protein YPS5</fullName>
    </alternativeName>
</protein>
<feature type="signal peptide" evidence="1">
    <location>
        <begin position="1"/>
        <end position="24"/>
    </location>
</feature>
<feature type="chain" id="PRO_0000014320" description="Yapsin-5">
    <location>
        <begin position="25"/>
        <end position="165"/>
    </location>
</feature>
<feature type="domain" description="Peptidase A1" evidence="2">
    <location>
        <begin position="67"/>
        <end position="165"/>
    </location>
</feature>
<feature type="glycosylation site" description="N-linked (GlcNAc...) asparagine" evidence="1">
    <location>
        <position position="57"/>
    </location>
</feature>
<evidence type="ECO:0000255" key="1"/>
<evidence type="ECO:0000255" key="2">
    <source>
        <dbReference type="PROSITE-ProRule" id="PRU01103"/>
    </source>
</evidence>
<evidence type="ECO:0000305" key="3"/>
<dbReference type="EMBL" id="X94357">
    <property type="protein sequence ID" value="CAA64128.1"/>
    <property type="molecule type" value="Genomic_DNA"/>
</dbReference>
<dbReference type="EMBL" id="Z72781">
    <property type="protein sequence ID" value="CAA96979.1"/>
    <property type="molecule type" value="Genomic_DNA"/>
</dbReference>
<dbReference type="EMBL" id="BK006941">
    <property type="protein sequence ID" value="DAA07859.1"/>
    <property type="molecule type" value="Genomic_DNA"/>
</dbReference>
<dbReference type="PIR" id="S61602">
    <property type="entry name" value="S61602"/>
</dbReference>
<dbReference type="RefSeq" id="NP_011255.1">
    <property type="nucleotide sequence ID" value="NM_001181125.1"/>
</dbReference>
<dbReference type="BioGRID" id="33019">
    <property type="interactions" value="41"/>
</dbReference>
<dbReference type="DIP" id="DIP-4875N"/>
<dbReference type="FunCoup" id="P53057">
    <property type="interactions" value="40"/>
</dbReference>
<dbReference type="IntAct" id="P53057">
    <property type="interactions" value="1"/>
</dbReference>
<dbReference type="MINT" id="P53057"/>
<dbReference type="STRING" id="4932.YGL259W"/>
<dbReference type="MEROPS" id="A01.A62"/>
<dbReference type="GlyCosmos" id="P53057">
    <property type="glycosylation" value="1 site, No reported glycans"/>
</dbReference>
<dbReference type="GlyGen" id="P53057">
    <property type="glycosylation" value="1 site"/>
</dbReference>
<dbReference type="PaxDb" id="4932-YGL259W"/>
<dbReference type="EnsemblFungi" id="YGL259W_mRNA">
    <property type="protein sequence ID" value="YGL259W"/>
    <property type="gene ID" value="YGL259W"/>
</dbReference>
<dbReference type="GeneID" id="852632"/>
<dbReference type="KEGG" id="sce:YGL259W"/>
<dbReference type="AGR" id="SGD:S000003228"/>
<dbReference type="SGD" id="S000003228">
    <property type="gene designation" value="YPS5"/>
</dbReference>
<dbReference type="VEuPathDB" id="FungiDB:YGL259W"/>
<dbReference type="eggNOG" id="KOG1339">
    <property type="taxonomic scope" value="Eukaryota"/>
</dbReference>
<dbReference type="HOGENOM" id="CLU_146433_0_0_1"/>
<dbReference type="InParanoid" id="P53057"/>
<dbReference type="OrthoDB" id="2747330at2759"/>
<dbReference type="BioCyc" id="YEAST:G3O-30727-MONOMER"/>
<dbReference type="BioGRID-ORCS" id="852632">
    <property type="hits" value="0 hits in 10 CRISPR screens"/>
</dbReference>
<dbReference type="Proteomes" id="UP000002311">
    <property type="component" value="Chromosome VII"/>
</dbReference>
<dbReference type="RNAct" id="P53057">
    <property type="molecule type" value="protein"/>
</dbReference>
<dbReference type="GO" id="GO:0004190">
    <property type="term" value="F:aspartic-type endopeptidase activity"/>
    <property type="evidence" value="ECO:0000250"/>
    <property type="project" value="SGD"/>
</dbReference>
<dbReference type="Gene3D" id="2.40.70.10">
    <property type="entry name" value="Acid Proteases"/>
    <property type="match status" value="1"/>
</dbReference>
<dbReference type="InterPro" id="IPR033121">
    <property type="entry name" value="PEPTIDASE_A1"/>
</dbReference>
<dbReference type="InterPro" id="IPR021109">
    <property type="entry name" value="Peptidase_aspartic_dom_sf"/>
</dbReference>
<dbReference type="Pfam" id="PF00026">
    <property type="entry name" value="Asp"/>
    <property type="match status" value="1"/>
</dbReference>
<dbReference type="SUPFAM" id="SSF50630">
    <property type="entry name" value="Acid proteases"/>
    <property type="match status" value="1"/>
</dbReference>
<dbReference type="PROSITE" id="PS51767">
    <property type="entry name" value="PEPTIDASE_A1"/>
    <property type="match status" value="1"/>
</dbReference>
<gene>
    <name type="primary">YPS5</name>
    <name type="ordered locus">YGL259W</name>
    <name type="ORF">NRA165</name>
</gene>
<reference key="1">
    <citation type="journal article" date="1996" name="Yeast">
        <title>Sequence of a 39,411 bp DNA fragment covering the left end of chromosome VII of Saccharomyces cerevisiae.</title>
        <authorList>
            <person name="Coissac E."/>
            <person name="Maillier E."/>
            <person name="Robineau S."/>
            <person name="Netter P."/>
        </authorList>
    </citation>
    <scope>NUCLEOTIDE SEQUENCE [GENOMIC DNA]</scope>
    <source>
        <strain>ATCC 96604 / S288c / FY1679</strain>
    </source>
</reference>
<reference key="2">
    <citation type="journal article" date="1997" name="Nature">
        <title>The nucleotide sequence of Saccharomyces cerevisiae chromosome VII.</title>
        <authorList>
            <person name="Tettelin H."/>
            <person name="Agostoni-Carbone M.L."/>
            <person name="Albermann K."/>
            <person name="Albers M."/>
            <person name="Arroyo J."/>
            <person name="Backes U."/>
            <person name="Barreiros T."/>
            <person name="Bertani I."/>
            <person name="Bjourson A.J."/>
            <person name="Brueckner M."/>
            <person name="Bruschi C.V."/>
            <person name="Carignani G."/>
            <person name="Castagnoli L."/>
            <person name="Cerdan E."/>
            <person name="Clemente M.L."/>
            <person name="Coblenz A."/>
            <person name="Coglievina M."/>
            <person name="Coissac E."/>
            <person name="Defoor E."/>
            <person name="Del Bino S."/>
            <person name="Delius H."/>
            <person name="Delneri D."/>
            <person name="de Wergifosse P."/>
            <person name="Dujon B."/>
            <person name="Durand P."/>
            <person name="Entian K.-D."/>
            <person name="Eraso P."/>
            <person name="Escribano V."/>
            <person name="Fabiani L."/>
            <person name="Fartmann B."/>
            <person name="Feroli F."/>
            <person name="Feuermann M."/>
            <person name="Frontali L."/>
            <person name="Garcia-Gonzalez M."/>
            <person name="Garcia-Saez M.I."/>
            <person name="Goffeau A."/>
            <person name="Guerreiro P."/>
            <person name="Hani J."/>
            <person name="Hansen M."/>
            <person name="Hebling U."/>
            <person name="Hernandez K."/>
            <person name="Heumann K."/>
            <person name="Hilger F."/>
            <person name="Hofmann B."/>
            <person name="Indge K.J."/>
            <person name="James C.M."/>
            <person name="Klima R."/>
            <person name="Koetter P."/>
            <person name="Kramer B."/>
            <person name="Kramer W."/>
            <person name="Lauquin G."/>
            <person name="Leuther H."/>
            <person name="Louis E.J."/>
            <person name="Maillier E."/>
            <person name="Marconi A."/>
            <person name="Martegani E."/>
            <person name="Mazon M.J."/>
            <person name="Mazzoni C."/>
            <person name="McReynolds A.D.K."/>
            <person name="Melchioretto P."/>
            <person name="Mewes H.-W."/>
            <person name="Minenkova O."/>
            <person name="Mueller-Auer S."/>
            <person name="Nawrocki A."/>
            <person name="Netter P."/>
            <person name="Neu R."/>
            <person name="Nombela C."/>
            <person name="Oliver S.G."/>
            <person name="Panzeri L."/>
            <person name="Paoluzi S."/>
            <person name="Plevani P."/>
            <person name="Portetelle D."/>
            <person name="Portillo F."/>
            <person name="Potier S."/>
            <person name="Purnelle B."/>
            <person name="Rieger M."/>
            <person name="Riles L."/>
            <person name="Rinaldi T."/>
            <person name="Robben J."/>
            <person name="Rodrigues-Pousada C."/>
            <person name="Rodriguez-Belmonte E."/>
            <person name="Rodriguez-Torres A.M."/>
            <person name="Rose M."/>
            <person name="Ruzzi M."/>
            <person name="Saliola M."/>
            <person name="Sanchez-Perez M."/>
            <person name="Schaefer B."/>
            <person name="Schaefer M."/>
            <person name="Scharfe M."/>
            <person name="Schmidheini T."/>
            <person name="Schreer A."/>
            <person name="Skala J."/>
            <person name="Souciet J.-L."/>
            <person name="Steensma H.Y."/>
            <person name="Talla E."/>
            <person name="Thierry A."/>
            <person name="Vandenbol M."/>
            <person name="van der Aart Q.J.M."/>
            <person name="Van Dyck L."/>
            <person name="Vanoni M."/>
            <person name="Verhasselt P."/>
            <person name="Voet M."/>
            <person name="Volckaert G."/>
            <person name="Wambutt R."/>
            <person name="Watson M.D."/>
            <person name="Weber N."/>
            <person name="Wedler E."/>
            <person name="Wedler H."/>
            <person name="Wipfli P."/>
            <person name="Wolf K."/>
            <person name="Wright L.F."/>
            <person name="Zaccaria P."/>
            <person name="Zimmermann M."/>
            <person name="Zollner A."/>
            <person name="Kleine K."/>
        </authorList>
    </citation>
    <scope>NUCLEOTIDE SEQUENCE [LARGE SCALE GENOMIC DNA]</scope>
    <source>
        <strain>ATCC 204508 / S288c</strain>
    </source>
</reference>
<reference key="3">
    <citation type="journal article" date="2014" name="G3 (Bethesda)">
        <title>The reference genome sequence of Saccharomyces cerevisiae: Then and now.</title>
        <authorList>
            <person name="Engel S.R."/>
            <person name="Dietrich F.S."/>
            <person name="Fisk D.G."/>
            <person name="Binkley G."/>
            <person name="Balakrishnan R."/>
            <person name="Costanzo M.C."/>
            <person name="Dwight S.S."/>
            <person name="Hitz B.C."/>
            <person name="Karra K."/>
            <person name="Nash R.S."/>
            <person name="Weng S."/>
            <person name="Wong E.D."/>
            <person name="Lloyd P."/>
            <person name="Skrzypek M.S."/>
            <person name="Miyasato S.R."/>
            <person name="Simison M."/>
            <person name="Cherry J.M."/>
        </authorList>
    </citation>
    <scope>GENOME REANNOTATION</scope>
    <source>
        <strain>ATCC 204508 / S288c</strain>
    </source>
</reference>
<reference key="4">
    <citation type="journal article" date="1999" name="Biochem. J.">
        <title>Identification and characterization of Saccharomyces cerevisiae yapsin 3, a new member of the yapsin family of aspartic proteases encoded by the YPS3 gene.</title>
        <authorList>
            <person name="Olsen V."/>
            <person name="Cawley N.X."/>
            <person name="Brandt J."/>
            <person name="Egel-Mitani M."/>
            <person name="Loh Y.P."/>
        </authorList>
    </citation>
    <scope>GENE NAME</scope>
</reference>
<proteinExistence type="uncertain"/>
<comment type="similarity">
    <text evidence="3">Belongs to the peptidase A1 family.</text>
</comment>
<comment type="caution">
    <text evidence="3">Could be the product of a pseudogene. Contains only the N-ter part of the functional aspartic proteinases.</text>
</comment>
<name>YPS5_YEAST</name>
<organism>
    <name type="scientific">Saccharomyces cerevisiae (strain ATCC 204508 / S288c)</name>
    <name type="common">Baker's yeast</name>
    <dbReference type="NCBI Taxonomy" id="559292"/>
    <lineage>
        <taxon>Eukaryota</taxon>
        <taxon>Fungi</taxon>
        <taxon>Dikarya</taxon>
        <taxon>Ascomycota</taxon>
        <taxon>Saccharomycotina</taxon>
        <taxon>Saccharomycetes</taxon>
        <taxon>Saccharomycetales</taxon>
        <taxon>Saccharomycetaceae</taxon>
        <taxon>Saccharomyces</taxon>
    </lineage>
</organism>
<keyword id="KW-0325">Glycoprotein</keyword>
<keyword id="KW-1185">Reference proteome</keyword>
<keyword id="KW-0732">Signal</keyword>